<keyword id="KW-0963">Cytoplasm</keyword>
<keyword id="KW-0690">Ribosome biogenesis</keyword>
<evidence type="ECO:0000255" key="1">
    <source>
        <dbReference type="HAMAP-Rule" id="MF_01077"/>
    </source>
</evidence>
<evidence type="ECO:0000256" key="2">
    <source>
        <dbReference type="SAM" id="MobiDB-lite"/>
    </source>
</evidence>
<evidence type="ECO:0000305" key="3"/>
<comment type="function">
    <text evidence="1">Required for maturation of 30S ribosomal subunits.</text>
</comment>
<comment type="subcellular location">
    <subcellularLocation>
        <location evidence="1">Cytoplasm</location>
    </subcellularLocation>
</comment>
<comment type="similarity">
    <text evidence="1">Belongs to the RimP family.</text>
</comment>
<comment type="sequence caution" evidence="3">
    <conflict type="erroneous initiation">
        <sequence resource="EMBL-CDS" id="ABD86052"/>
    </conflict>
</comment>
<dbReference type="EMBL" id="CP000301">
    <property type="protein sequence ID" value="ABD86052.1"/>
    <property type="status" value="ALT_INIT"/>
    <property type="molecule type" value="Genomic_DNA"/>
</dbReference>
<dbReference type="SMR" id="Q21C34"/>
<dbReference type="STRING" id="316056.RPC_0477"/>
<dbReference type="KEGG" id="rpc:RPC_0477"/>
<dbReference type="eggNOG" id="COG0779">
    <property type="taxonomic scope" value="Bacteria"/>
</dbReference>
<dbReference type="HOGENOM" id="CLU_070525_0_0_5"/>
<dbReference type="OrthoDB" id="9805006at2"/>
<dbReference type="GO" id="GO:0005829">
    <property type="term" value="C:cytosol"/>
    <property type="evidence" value="ECO:0007669"/>
    <property type="project" value="TreeGrafter"/>
</dbReference>
<dbReference type="GO" id="GO:0000028">
    <property type="term" value="P:ribosomal small subunit assembly"/>
    <property type="evidence" value="ECO:0007669"/>
    <property type="project" value="TreeGrafter"/>
</dbReference>
<dbReference type="GO" id="GO:0006412">
    <property type="term" value="P:translation"/>
    <property type="evidence" value="ECO:0007669"/>
    <property type="project" value="TreeGrafter"/>
</dbReference>
<dbReference type="CDD" id="cd01734">
    <property type="entry name" value="YlxS_C"/>
    <property type="match status" value="1"/>
</dbReference>
<dbReference type="Gene3D" id="3.30.300.70">
    <property type="entry name" value="RimP-like superfamily, N-terminal"/>
    <property type="match status" value="1"/>
</dbReference>
<dbReference type="HAMAP" id="MF_01077">
    <property type="entry name" value="RimP"/>
    <property type="match status" value="1"/>
</dbReference>
<dbReference type="InterPro" id="IPR003728">
    <property type="entry name" value="Ribosome_maturation_RimP"/>
</dbReference>
<dbReference type="InterPro" id="IPR028998">
    <property type="entry name" value="RimP_C"/>
</dbReference>
<dbReference type="InterPro" id="IPR036847">
    <property type="entry name" value="RimP_C_sf"/>
</dbReference>
<dbReference type="InterPro" id="IPR028989">
    <property type="entry name" value="RimP_N"/>
</dbReference>
<dbReference type="InterPro" id="IPR035956">
    <property type="entry name" value="RimP_N_sf"/>
</dbReference>
<dbReference type="NCBIfam" id="NF000932">
    <property type="entry name" value="PRK00092.2-5"/>
    <property type="match status" value="1"/>
</dbReference>
<dbReference type="NCBIfam" id="NF000933">
    <property type="entry name" value="PRK00092.2-6"/>
    <property type="match status" value="1"/>
</dbReference>
<dbReference type="PANTHER" id="PTHR33867">
    <property type="entry name" value="RIBOSOME MATURATION FACTOR RIMP"/>
    <property type="match status" value="1"/>
</dbReference>
<dbReference type="PANTHER" id="PTHR33867:SF1">
    <property type="entry name" value="RIBOSOME MATURATION FACTOR RIMP"/>
    <property type="match status" value="1"/>
</dbReference>
<dbReference type="Pfam" id="PF17384">
    <property type="entry name" value="DUF150_C"/>
    <property type="match status" value="1"/>
</dbReference>
<dbReference type="Pfam" id="PF02576">
    <property type="entry name" value="RimP_N"/>
    <property type="match status" value="1"/>
</dbReference>
<dbReference type="SUPFAM" id="SSF74942">
    <property type="entry name" value="YhbC-like, C-terminal domain"/>
    <property type="match status" value="1"/>
</dbReference>
<dbReference type="SUPFAM" id="SSF75420">
    <property type="entry name" value="YhbC-like, N-terminal domain"/>
    <property type="match status" value="1"/>
</dbReference>
<protein>
    <recommendedName>
        <fullName evidence="1">Ribosome maturation factor RimP</fullName>
    </recommendedName>
</protein>
<proteinExistence type="inferred from homology"/>
<name>RIMP_RHOPB</name>
<reference key="1">
    <citation type="submission" date="2006-03" db="EMBL/GenBank/DDBJ databases">
        <title>Complete sequence of Rhodopseudomonas palustris BisB18.</title>
        <authorList>
            <consortium name="US DOE Joint Genome Institute"/>
            <person name="Copeland A."/>
            <person name="Lucas S."/>
            <person name="Lapidus A."/>
            <person name="Barry K."/>
            <person name="Detter J.C."/>
            <person name="Glavina del Rio T."/>
            <person name="Hammon N."/>
            <person name="Israni S."/>
            <person name="Dalin E."/>
            <person name="Tice H."/>
            <person name="Pitluck S."/>
            <person name="Chain P."/>
            <person name="Malfatti S."/>
            <person name="Shin M."/>
            <person name="Vergez L."/>
            <person name="Schmutz J."/>
            <person name="Larimer F."/>
            <person name="Land M."/>
            <person name="Hauser L."/>
            <person name="Pelletier D.A."/>
            <person name="Kyrpides N."/>
            <person name="Anderson I."/>
            <person name="Oda Y."/>
            <person name="Harwood C.S."/>
            <person name="Richardson P."/>
        </authorList>
    </citation>
    <scope>NUCLEOTIDE SEQUENCE [LARGE SCALE GENOMIC DNA]</scope>
    <source>
        <strain>BisB18</strain>
    </source>
</reference>
<organism>
    <name type="scientific">Rhodopseudomonas palustris (strain BisB18)</name>
    <dbReference type="NCBI Taxonomy" id="316056"/>
    <lineage>
        <taxon>Bacteria</taxon>
        <taxon>Pseudomonadati</taxon>
        <taxon>Pseudomonadota</taxon>
        <taxon>Alphaproteobacteria</taxon>
        <taxon>Hyphomicrobiales</taxon>
        <taxon>Nitrobacteraceae</taxon>
        <taxon>Rhodopseudomonas</taxon>
    </lineage>
</organism>
<feature type="chain" id="PRO_0000384747" description="Ribosome maturation factor RimP">
    <location>
        <begin position="1"/>
        <end position="262"/>
    </location>
</feature>
<feature type="region of interest" description="Disordered" evidence="2">
    <location>
        <begin position="197"/>
        <end position="262"/>
    </location>
</feature>
<feature type="compositionally biased region" description="Basic residues" evidence="2">
    <location>
        <begin position="223"/>
        <end position="233"/>
    </location>
</feature>
<feature type="compositionally biased region" description="Basic and acidic residues" evidence="2">
    <location>
        <begin position="240"/>
        <end position="254"/>
    </location>
</feature>
<sequence>MTDPTPAAVDLDLLAEPRLVVEPGLGARVAAVAGPVLQGMGYRLVRIKVSGELGCTVQIMAERPDGTMLVEDCEAISHALSPVLDIADPVERAYRLEISSPGIDRPLVRRSDFERYEGYLVKIEMAVAVGGRKRFRGLLGPLQGDAVLLAREGARDGEDPNSLLPLEDIASANLVLTDELIAESMRRGKIAEREMKRELGVLPPPPPHAKKSDPTKSNAPKAKLPKAKLKAAKKPPPTNTKEHRLAAAERKRLGQTDPTEGD</sequence>
<gene>
    <name evidence="1" type="primary">rimP</name>
    <name type="ordered locus">RPC_0477</name>
</gene>
<accession>Q21C34</accession>